<organism>
    <name type="scientific">Staphylococcus aureus (strain N315)</name>
    <dbReference type="NCBI Taxonomy" id="158879"/>
    <lineage>
        <taxon>Bacteria</taxon>
        <taxon>Bacillati</taxon>
        <taxon>Bacillota</taxon>
        <taxon>Bacilli</taxon>
        <taxon>Bacillales</taxon>
        <taxon>Staphylococcaceae</taxon>
        <taxon>Staphylococcus</taxon>
    </lineage>
</organism>
<proteinExistence type="evidence at protein level"/>
<keyword id="KW-0067">ATP-binding</keyword>
<keyword id="KW-0418">Kinase</keyword>
<keyword id="KW-0460">Magnesium</keyword>
<keyword id="KW-0479">Metal-binding</keyword>
<keyword id="KW-0547">Nucleotide-binding</keyword>
<keyword id="KW-0784">Thiamine biosynthesis</keyword>
<keyword id="KW-0808">Transferase</keyword>
<dbReference type="EC" id="2.7.1.50" evidence="1"/>
<dbReference type="EMBL" id="BA000018">
    <property type="protein sequence ID" value="BAB43179.1"/>
    <property type="molecule type" value="Genomic_DNA"/>
</dbReference>
<dbReference type="PIR" id="B90002">
    <property type="entry name" value="B90002"/>
</dbReference>
<dbReference type="RefSeq" id="WP_001108483.1">
    <property type="nucleotide sequence ID" value="NC_002745.2"/>
</dbReference>
<dbReference type="SMR" id="P66923"/>
<dbReference type="EnsemblBacteria" id="BAB43179">
    <property type="protein sequence ID" value="BAB43179"/>
    <property type="gene ID" value="BAB43179"/>
</dbReference>
<dbReference type="KEGG" id="sau:SA1895"/>
<dbReference type="HOGENOM" id="CLU_019943_0_2_9"/>
<dbReference type="UniPathway" id="UPA00060">
    <property type="reaction ID" value="UER00139"/>
</dbReference>
<dbReference type="GO" id="GO:0005524">
    <property type="term" value="F:ATP binding"/>
    <property type="evidence" value="ECO:0007669"/>
    <property type="project" value="UniProtKB-UniRule"/>
</dbReference>
<dbReference type="GO" id="GO:0004417">
    <property type="term" value="F:hydroxyethylthiazole kinase activity"/>
    <property type="evidence" value="ECO:0007669"/>
    <property type="project" value="UniProtKB-UniRule"/>
</dbReference>
<dbReference type="GO" id="GO:0000287">
    <property type="term" value="F:magnesium ion binding"/>
    <property type="evidence" value="ECO:0007669"/>
    <property type="project" value="UniProtKB-UniRule"/>
</dbReference>
<dbReference type="GO" id="GO:0009228">
    <property type="term" value="P:thiamine biosynthetic process"/>
    <property type="evidence" value="ECO:0007669"/>
    <property type="project" value="UniProtKB-KW"/>
</dbReference>
<dbReference type="GO" id="GO:0009229">
    <property type="term" value="P:thiamine diphosphate biosynthetic process"/>
    <property type="evidence" value="ECO:0007669"/>
    <property type="project" value="UniProtKB-UniRule"/>
</dbReference>
<dbReference type="CDD" id="cd01170">
    <property type="entry name" value="THZ_kinase"/>
    <property type="match status" value="1"/>
</dbReference>
<dbReference type="Gene3D" id="3.40.1190.20">
    <property type="match status" value="1"/>
</dbReference>
<dbReference type="HAMAP" id="MF_00228">
    <property type="entry name" value="Thz_kinase"/>
    <property type="match status" value="1"/>
</dbReference>
<dbReference type="InterPro" id="IPR000417">
    <property type="entry name" value="Hyethyz_kinase"/>
</dbReference>
<dbReference type="InterPro" id="IPR029056">
    <property type="entry name" value="Ribokinase-like"/>
</dbReference>
<dbReference type="NCBIfam" id="NF006830">
    <property type="entry name" value="PRK09355.1"/>
    <property type="match status" value="1"/>
</dbReference>
<dbReference type="Pfam" id="PF02110">
    <property type="entry name" value="HK"/>
    <property type="match status" value="1"/>
</dbReference>
<dbReference type="PIRSF" id="PIRSF000513">
    <property type="entry name" value="Thz_kinase"/>
    <property type="match status" value="1"/>
</dbReference>
<dbReference type="PRINTS" id="PR01099">
    <property type="entry name" value="HYETHTZKNASE"/>
</dbReference>
<dbReference type="SUPFAM" id="SSF53613">
    <property type="entry name" value="Ribokinase-like"/>
    <property type="match status" value="1"/>
</dbReference>
<gene>
    <name evidence="1" type="primary">thiM</name>
    <name type="ordered locus">SA1895</name>
</gene>
<accession>P66923</accession>
<accession>Q99SG5</accession>
<protein>
    <recommendedName>
        <fullName evidence="1">Hydroxyethylthiazole kinase</fullName>
        <ecNumber evidence="1">2.7.1.50</ecNumber>
    </recommendedName>
    <alternativeName>
        <fullName evidence="1">4-methyl-5-beta-hydroxyethylthiazole kinase</fullName>
        <shortName evidence="1">TH kinase</shortName>
        <shortName evidence="1">Thz kinase</shortName>
    </alternativeName>
</protein>
<reference key="1">
    <citation type="journal article" date="2001" name="Lancet">
        <title>Whole genome sequencing of meticillin-resistant Staphylococcus aureus.</title>
        <authorList>
            <person name="Kuroda M."/>
            <person name="Ohta T."/>
            <person name="Uchiyama I."/>
            <person name="Baba T."/>
            <person name="Yuzawa H."/>
            <person name="Kobayashi I."/>
            <person name="Cui L."/>
            <person name="Oguchi A."/>
            <person name="Aoki K."/>
            <person name="Nagai Y."/>
            <person name="Lian J.-Q."/>
            <person name="Ito T."/>
            <person name="Kanamori M."/>
            <person name="Matsumaru H."/>
            <person name="Maruyama A."/>
            <person name="Murakami H."/>
            <person name="Hosoyama A."/>
            <person name="Mizutani-Ui Y."/>
            <person name="Takahashi N.K."/>
            <person name="Sawano T."/>
            <person name="Inoue R."/>
            <person name="Kaito C."/>
            <person name="Sekimizu K."/>
            <person name="Hirakawa H."/>
            <person name="Kuhara S."/>
            <person name="Goto S."/>
            <person name="Yabuzaki J."/>
            <person name="Kanehisa M."/>
            <person name="Yamashita A."/>
            <person name="Oshima K."/>
            <person name="Furuya K."/>
            <person name="Yoshino C."/>
            <person name="Shiba T."/>
            <person name="Hattori M."/>
            <person name="Ogasawara N."/>
            <person name="Hayashi H."/>
            <person name="Hiramatsu K."/>
        </authorList>
    </citation>
    <scope>NUCLEOTIDE SEQUENCE [LARGE SCALE GENOMIC DNA]</scope>
    <source>
        <strain>N315</strain>
    </source>
</reference>
<reference key="2">
    <citation type="submission" date="2007-10" db="UniProtKB">
        <title>Shotgun proteomic analysis of total and membrane protein extracts of S. aureus strain N315.</title>
        <authorList>
            <person name="Vaezzadeh A.R."/>
            <person name="Deshusses J."/>
            <person name="Lescuyer P."/>
            <person name="Hochstrasser D.F."/>
        </authorList>
    </citation>
    <scope>IDENTIFICATION BY MASS SPECTROMETRY [LARGE SCALE ANALYSIS]</scope>
    <source>
        <strain>N315</strain>
    </source>
</reference>
<name>THIM_STAAN</name>
<feature type="chain" id="PRO_0000156954" description="Hydroxyethylthiazole kinase">
    <location>
        <begin position="1"/>
        <end position="263"/>
    </location>
</feature>
<feature type="binding site" evidence="1">
    <location>
        <position position="39"/>
    </location>
    <ligand>
        <name>substrate</name>
    </ligand>
</feature>
<feature type="binding site" evidence="1">
    <location>
        <position position="115"/>
    </location>
    <ligand>
        <name>ATP</name>
        <dbReference type="ChEBI" id="CHEBI:30616"/>
    </ligand>
</feature>
<feature type="binding site" evidence="1">
    <location>
        <position position="160"/>
    </location>
    <ligand>
        <name>ATP</name>
        <dbReference type="ChEBI" id="CHEBI:30616"/>
    </ligand>
</feature>
<feature type="binding site" evidence="1">
    <location>
        <position position="187"/>
    </location>
    <ligand>
        <name>substrate</name>
    </ligand>
</feature>
<evidence type="ECO:0000255" key="1">
    <source>
        <dbReference type="HAMAP-Rule" id="MF_00228"/>
    </source>
</evidence>
<comment type="function">
    <text evidence="1">Catalyzes the phosphorylation of the hydroxyl group of 4-methyl-5-beta-hydroxyethylthiazole (THZ).</text>
</comment>
<comment type="catalytic activity">
    <reaction evidence="1">
        <text>5-(2-hydroxyethyl)-4-methylthiazole + ATP = 4-methyl-5-(2-phosphooxyethyl)-thiazole + ADP + H(+)</text>
        <dbReference type="Rhea" id="RHEA:24212"/>
        <dbReference type="ChEBI" id="CHEBI:15378"/>
        <dbReference type="ChEBI" id="CHEBI:17957"/>
        <dbReference type="ChEBI" id="CHEBI:30616"/>
        <dbReference type="ChEBI" id="CHEBI:58296"/>
        <dbReference type="ChEBI" id="CHEBI:456216"/>
        <dbReference type="EC" id="2.7.1.50"/>
    </reaction>
</comment>
<comment type="cofactor">
    <cofactor evidence="1">
        <name>Mg(2+)</name>
        <dbReference type="ChEBI" id="CHEBI:18420"/>
    </cofactor>
</comment>
<comment type="pathway">
    <text evidence="1">Cofactor biosynthesis; thiamine diphosphate biosynthesis; 4-methyl-5-(2-phosphoethyl)-thiazole from 5-(2-hydroxyethyl)-4-methylthiazole: step 1/1.</text>
</comment>
<comment type="similarity">
    <text evidence="1">Belongs to the Thz kinase family.</text>
</comment>
<sequence length="263" mass="28067">MNYLNKIRIENPLTICYTNDVVKNFTANGLLSIGASPAMSEAPEEAEEFYKVAQALLINIGTLTAQNEQDIIAIAQTANEAGLPIVFDPVAVGASTYRKQFCKLLLKSAKVSVIKGNASEILALIDDTATMKGTDSDANLDAVAIAKKAYAIYKTAIVITGKEDVIVQDNKAIVLANGSPLLARVTGAGCLLGGVIAGFLFRETEPDIEALIEAVSVFNIAAEVAAENENCGGPGTFSPLLLDTLYHLNETTYQQRIRIQEVE</sequence>